<accession>Q6BY69</accession>
<accession>Q96VQ4</accession>
<reference key="1">
    <citation type="journal article" date="2001" name="Yeast">
        <title>A minisatellite sequence in the upstream region of DURA3 gene from halotolerant yeast Debaryomyces hansenii.</title>
        <authorList>
            <person name="Bansal P.K."/>
            <person name="Sharma P."/>
            <person name="Mondal A.K."/>
        </authorList>
    </citation>
    <scope>NUCLEOTIDE SEQUENCE [GENOMIC DNA]</scope>
    <source>
        <strain>MTCC 234</strain>
    </source>
</reference>
<reference key="2">
    <citation type="journal article" date="2004" name="Nature">
        <title>Genome evolution in yeasts.</title>
        <authorList>
            <person name="Dujon B."/>
            <person name="Sherman D."/>
            <person name="Fischer G."/>
            <person name="Durrens P."/>
            <person name="Casaregola S."/>
            <person name="Lafontaine I."/>
            <person name="de Montigny J."/>
            <person name="Marck C."/>
            <person name="Neuveglise C."/>
            <person name="Talla E."/>
            <person name="Goffard N."/>
            <person name="Frangeul L."/>
            <person name="Aigle M."/>
            <person name="Anthouard V."/>
            <person name="Babour A."/>
            <person name="Barbe V."/>
            <person name="Barnay S."/>
            <person name="Blanchin S."/>
            <person name="Beckerich J.-M."/>
            <person name="Beyne E."/>
            <person name="Bleykasten C."/>
            <person name="Boisrame A."/>
            <person name="Boyer J."/>
            <person name="Cattolico L."/>
            <person name="Confanioleri F."/>
            <person name="de Daruvar A."/>
            <person name="Despons L."/>
            <person name="Fabre E."/>
            <person name="Fairhead C."/>
            <person name="Ferry-Dumazet H."/>
            <person name="Groppi A."/>
            <person name="Hantraye F."/>
            <person name="Hennequin C."/>
            <person name="Jauniaux N."/>
            <person name="Joyet P."/>
            <person name="Kachouri R."/>
            <person name="Kerrest A."/>
            <person name="Koszul R."/>
            <person name="Lemaire M."/>
            <person name="Lesur I."/>
            <person name="Ma L."/>
            <person name="Muller H."/>
            <person name="Nicaud J.-M."/>
            <person name="Nikolski M."/>
            <person name="Oztas S."/>
            <person name="Ozier-Kalogeropoulos O."/>
            <person name="Pellenz S."/>
            <person name="Potier S."/>
            <person name="Richard G.-F."/>
            <person name="Straub M.-L."/>
            <person name="Suleau A."/>
            <person name="Swennen D."/>
            <person name="Tekaia F."/>
            <person name="Wesolowski-Louvel M."/>
            <person name="Westhof E."/>
            <person name="Wirth B."/>
            <person name="Zeniou-Meyer M."/>
            <person name="Zivanovic Y."/>
            <person name="Bolotin-Fukuhara M."/>
            <person name="Thierry A."/>
            <person name="Bouchier C."/>
            <person name="Caudron B."/>
            <person name="Scarpelli C."/>
            <person name="Gaillardin C."/>
            <person name="Weissenbach J."/>
            <person name="Wincker P."/>
            <person name="Souciet J.-L."/>
        </authorList>
    </citation>
    <scope>NUCLEOTIDE SEQUENCE [LARGE SCALE GENOMIC DNA]</scope>
    <source>
        <strain>ATCC 36239 / CBS 767 / BCRC 21394 / JCM 1990 / NBRC 0083 / IGC 2968</strain>
    </source>
</reference>
<comment type="catalytic activity">
    <reaction evidence="2">
        <text>orotidine 5'-phosphate + H(+) = UMP + CO2</text>
        <dbReference type="Rhea" id="RHEA:11596"/>
        <dbReference type="ChEBI" id="CHEBI:15378"/>
        <dbReference type="ChEBI" id="CHEBI:16526"/>
        <dbReference type="ChEBI" id="CHEBI:57538"/>
        <dbReference type="ChEBI" id="CHEBI:57865"/>
        <dbReference type="EC" id="4.1.1.23"/>
    </reaction>
</comment>
<comment type="pathway">
    <text>Pyrimidine metabolism; UMP biosynthesis via de novo pathway; UMP from orotate: step 2/2.</text>
</comment>
<comment type="similarity">
    <text evidence="3">Belongs to the OMP decarboxylase family.</text>
</comment>
<gene>
    <name type="primary">URA3</name>
    <name type="ordered locus">DEHA2A11968g</name>
</gene>
<feature type="chain" id="PRO_0000134658" description="Orotidine 5'-phosphate decarboxylase">
    <location>
        <begin position="1"/>
        <end position="267"/>
    </location>
</feature>
<feature type="active site" description="Proton donor" evidence="2">
    <location>
        <position position="94"/>
    </location>
</feature>
<feature type="binding site" evidence="1">
    <location>
        <position position="38"/>
    </location>
    <ligand>
        <name>substrate</name>
    </ligand>
</feature>
<feature type="binding site" evidence="1">
    <location>
        <begin position="60"/>
        <end position="62"/>
    </location>
    <ligand>
        <name>substrate</name>
    </ligand>
</feature>
<feature type="binding site" evidence="1">
    <location>
        <begin position="92"/>
        <end position="101"/>
    </location>
    <ligand>
        <name>substrate</name>
    </ligand>
</feature>
<feature type="binding site" evidence="1">
    <location>
        <position position="218"/>
    </location>
    <ligand>
        <name>substrate</name>
    </ligand>
</feature>
<feature type="binding site" evidence="1">
    <location>
        <position position="236"/>
    </location>
    <ligand>
        <name>substrate</name>
    </ligand>
</feature>
<feature type="sequence conflict" description="In Ref. 1; AAK54442." evidence="3" ref="1">
    <original>KT</original>
    <variation>NK</variation>
    <location>
        <begin position="3"/>
        <end position="4"/>
    </location>
</feature>
<feature type="sequence conflict" description="In Ref. 1; AAK54442." evidence="3" ref="1">
    <original>N</original>
    <variation>S</variation>
    <location>
        <position position="28"/>
    </location>
</feature>
<feature type="sequence conflict" description="In Ref. 1; AAK54442." evidence="3" ref="1">
    <original>E</original>
    <variation>D</variation>
    <location>
        <position position="43"/>
    </location>
</feature>
<feature type="sequence conflict" description="In Ref. 1; AAK54442." evidence="3" ref="1">
    <original>E</original>
    <variation>D</variation>
    <location>
        <position position="50"/>
    </location>
</feature>
<feature type="sequence conflict" description="In Ref. 1; AAK54442." evidence="3" ref="1">
    <original>F</original>
    <variation>Y</variation>
    <location>
        <position position="69"/>
    </location>
</feature>
<feature type="sequence conflict" description="In Ref. 1; AAK54442." evidence="3" ref="1">
    <original>VV</original>
    <variation>II</variation>
    <location>
        <begin position="75"/>
        <end position="76"/>
    </location>
</feature>
<feature type="sequence conflict" description="In Ref. 1; AAK54442." evidence="3" ref="1">
    <original>SSK</original>
    <variation>VSS</variation>
    <location>
        <begin position="141"/>
        <end position="143"/>
    </location>
</feature>
<feature type="sequence conflict" description="In Ref. 1; AAK54442." evidence="3" ref="1">
    <original>EK</original>
    <variation>GL</variation>
    <location>
        <begin position="167"/>
        <end position="168"/>
    </location>
</feature>
<feature type="sequence conflict" description="In Ref. 1; AAK54442." evidence="3" ref="1">
    <original>T</original>
    <variation>S</variation>
    <location>
        <position position="192"/>
    </location>
</feature>
<feature type="sequence conflict" description="In Ref. 1; AAK54442." evidence="3" ref="1">
    <original>V</original>
    <variation>I</variation>
    <location>
        <position position="200"/>
    </location>
</feature>
<feature type="sequence conflict" description="In Ref. 1; AAK54442." evidence="3" ref="1">
    <original>Q</original>
    <variation>E</variation>
    <location>
        <position position="223"/>
    </location>
</feature>
<feature type="sequence conflict" description="In Ref. 1; AAK54442." evidence="3" ref="1">
    <original>T</original>
    <variation>S</variation>
    <location>
        <position position="226"/>
    </location>
</feature>
<keyword id="KW-0210">Decarboxylase</keyword>
<keyword id="KW-0456">Lyase</keyword>
<keyword id="KW-0665">Pyrimidine biosynthesis</keyword>
<keyword id="KW-1185">Reference proteome</keyword>
<evidence type="ECO:0000250" key="1"/>
<evidence type="ECO:0000255" key="2">
    <source>
        <dbReference type="PROSITE-ProRule" id="PRU10110"/>
    </source>
</evidence>
<evidence type="ECO:0000305" key="3"/>
<sequence>MVKTQTYTERASAHPSPVAQRLFKLMDNKKTNLCASVDVKSTEEFLTLIEKLGPYICLVKTHIDIIDDFSYEGTVVPLLALAKKHNFMIFEDRKFADIGNTVKSQYSGGVYKIAQWSDITNAHGITGSGIVKGLKEAAQESSKEPRGLLMLAELSSKGSLAYGEYTEKTIEIAKSDKEFVIGFIAQRDMGGTDEGFDWIVMTPGVGLDDKGDGLGQQYRTVDQVVTTGTDIIIVGRGLFGQGRDPTVEGKRYRDAGWNAYLKKTGSL</sequence>
<proteinExistence type="inferred from homology"/>
<name>PYRF_DEBHA</name>
<protein>
    <recommendedName>
        <fullName>Orotidine 5'-phosphate decarboxylase</fullName>
        <ecNumber>4.1.1.23</ecNumber>
    </recommendedName>
    <alternativeName>
        <fullName>OMP decarboxylase</fullName>
        <shortName>OMPDCase</shortName>
        <shortName>OMPdecase</shortName>
    </alternativeName>
    <alternativeName>
        <fullName>Uridine 5'-monophosphate synthase</fullName>
        <shortName>UMP synthase</shortName>
    </alternativeName>
</protein>
<dbReference type="EC" id="4.1.1.23"/>
<dbReference type="EMBL" id="AY033329">
    <property type="protein sequence ID" value="AAK54442.1"/>
    <property type="molecule type" value="Genomic_DNA"/>
</dbReference>
<dbReference type="EMBL" id="CR382133">
    <property type="protein sequence ID" value="CAG84825.1"/>
    <property type="molecule type" value="Genomic_DNA"/>
</dbReference>
<dbReference type="RefSeq" id="XP_456850.1">
    <property type="nucleotide sequence ID" value="XM_456850.1"/>
</dbReference>
<dbReference type="SMR" id="Q6BY69"/>
<dbReference type="FunCoup" id="Q6BY69">
    <property type="interactions" value="1160"/>
</dbReference>
<dbReference type="STRING" id="284592.Q6BY69"/>
<dbReference type="GeneID" id="2899491"/>
<dbReference type="KEGG" id="dha:DEHA2A11968g"/>
<dbReference type="VEuPathDB" id="FungiDB:DEHA2A11968g"/>
<dbReference type="eggNOG" id="KOG1377">
    <property type="taxonomic scope" value="Eukaryota"/>
</dbReference>
<dbReference type="HOGENOM" id="CLU_030821_0_0_1"/>
<dbReference type="InParanoid" id="Q6BY69"/>
<dbReference type="OMA" id="CLIKTHI"/>
<dbReference type="OrthoDB" id="10263753at2759"/>
<dbReference type="UniPathway" id="UPA00070">
    <property type="reaction ID" value="UER00120"/>
</dbReference>
<dbReference type="Proteomes" id="UP000000599">
    <property type="component" value="Chromosome A"/>
</dbReference>
<dbReference type="GO" id="GO:0005829">
    <property type="term" value="C:cytosol"/>
    <property type="evidence" value="ECO:0007669"/>
    <property type="project" value="EnsemblFungi"/>
</dbReference>
<dbReference type="GO" id="GO:0004590">
    <property type="term" value="F:orotidine-5'-phosphate decarboxylase activity"/>
    <property type="evidence" value="ECO:0007669"/>
    <property type="project" value="UniProtKB-EC"/>
</dbReference>
<dbReference type="GO" id="GO:0006207">
    <property type="term" value="P:'de novo' pyrimidine nucleobase biosynthetic process"/>
    <property type="evidence" value="ECO:0007669"/>
    <property type="project" value="EnsemblFungi"/>
</dbReference>
<dbReference type="GO" id="GO:0044205">
    <property type="term" value="P:'de novo' UMP biosynthetic process"/>
    <property type="evidence" value="ECO:0007669"/>
    <property type="project" value="UniProtKB-UniPathway"/>
</dbReference>
<dbReference type="CDD" id="cd04725">
    <property type="entry name" value="OMP_decarboxylase_like"/>
    <property type="match status" value="1"/>
</dbReference>
<dbReference type="FunFam" id="3.20.20.70:FF:000114">
    <property type="entry name" value="Decarboxylase,orotidine phosphate"/>
    <property type="match status" value="1"/>
</dbReference>
<dbReference type="Gene3D" id="3.20.20.70">
    <property type="entry name" value="Aldolase class I"/>
    <property type="match status" value="1"/>
</dbReference>
<dbReference type="InterPro" id="IPR013785">
    <property type="entry name" value="Aldolase_TIM"/>
</dbReference>
<dbReference type="InterPro" id="IPR014732">
    <property type="entry name" value="OMPdecase"/>
</dbReference>
<dbReference type="InterPro" id="IPR018089">
    <property type="entry name" value="OMPdecase_AS"/>
</dbReference>
<dbReference type="InterPro" id="IPR001754">
    <property type="entry name" value="OMPdeCOase_dom"/>
</dbReference>
<dbReference type="InterPro" id="IPR011060">
    <property type="entry name" value="RibuloseP-bd_barrel"/>
</dbReference>
<dbReference type="NCBIfam" id="TIGR01740">
    <property type="entry name" value="pyrF"/>
    <property type="match status" value="1"/>
</dbReference>
<dbReference type="PANTHER" id="PTHR32119">
    <property type="entry name" value="OROTIDINE 5'-PHOSPHATE DECARBOXYLASE"/>
    <property type="match status" value="1"/>
</dbReference>
<dbReference type="PANTHER" id="PTHR32119:SF2">
    <property type="entry name" value="OROTIDINE 5'-PHOSPHATE DECARBOXYLASE"/>
    <property type="match status" value="1"/>
</dbReference>
<dbReference type="Pfam" id="PF00215">
    <property type="entry name" value="OMPdecase"/>
    <property type="match status" value="1"/>
</dbReference>
<dbReference type="SMART" id="SM00934">
    <property type="entry name" value="OMPdecase"/>
    <property type="match status" value="1"/>
</dbReference>
<dbReference type="SUPFAM" id="SSF51366">
    <property type="entry name" value="Ribulose-phoshate binding barrel"/>
    <property type="match status" value="1"/>
</dbReference>
<dbReference type="PROSITE" id="PS00156">
    <property type="entry name" value="OMPDECASE"/>
    <property type="match status" value="1"/>
</dbReference>
<organism>
    <name type="scientific">Debaryomyces hansenii (strain ATCC 36239 / CBS 767 / BCRC 21394 / JCM 1990 / NBRC 0083 / IGC 2968)</name>
    <name type="common">Yeast</name>
    <name type="synonym">Torulaspora hansenii</name>
    <dbReference type="NCBI Taxonomy" id="284592"/>
    <lineage>
        <taxon>Eukaryota</taxon>
        <taxon>Fungi</taxon>
        <taxon>Dikarya</taxon>
        <taxon>Ascomycota</taxon>
        <taxon>Saccharomycotina</taxon>
        <taxon>Pichiomycetes</taxon>
        <taxon>Debaryomycetaceae</taxon>
        <taxon>Debaryomyces</taxon>
    </lineage>
</organism>